<accession>B0SA31</accession>
<sequence length="122" mass="13713">MINKTAKNTKRLRRAERVRYKLRQTSERPRLVFNKTNRYLTAQIIDDAKGVTLVYATTLEKDFPKHENSKKSKSAATELGKVVADKAKKAGVSQVVLDRSGMVYHGRIAAFADSAREGGLEF</sequence>
<protein>
    <recommendedName>
        <fullName evidence="1">Large ribosomal subunit protein uL18</fullName>
    </recommendedName>
    <alternativeName>
        <fullName evidence="2">50S ribosomal protein L18</fullName>
    </alternativeName>
</protein>
<reference key="1">
    <citation type="journal article" date="2008" name="PLoS ONE">
        <title>Genome sequence of the saprophyte Leptospira biflexa provides insights into the evolution of Leptospira and the pathogenesis of leptospirosis.</title>
        <authorList>
            <person name="Picardeau M."/>
            <person name="Bulach D.M."/>
            <person name="Bouchier C."/>
            <person name="Zuerner R.L."/>
            <person name="Zidane N."/>
            <person name="Wilson P.J."/>
            <person name="Creno S."/>
            <person name="Kuczek E.S."/>
            <person name="Bommezzadri S."/>
            <person name="Davis J.C."/>
            <person name="McGrath A."/>
            <person name="Johnson M.J."/>
            <person name="Boursaux-Eude C."/>
            <person name="Seemann T."/>
            <person name="Rouy Z."/>
            <person name="Coppel R.L."/>
            <person name="Rood J.I."/>
            <person name="Lajus A."/>
            <person name="Davies J.K."/>
            <person name="Medigue C."/>
            <person name="Adler B."/>
        </authorList>
    </citation>
    <scope>NUCLEOTIDE SEQUENCE [LARGE SCALE GENOMIC DNA]</scope>
    <source>
        <strain>Patoc 1 / Ames</strain>
    </source>
</reference>
<dbReference type="EMBL" id="CP000777">
    <property type="protein sequence ID" value="ABZ94401.1"/>
    <property type="molecule type" value="Genomic_DNA"/>
</dbReference>
<dbReference type="RefSeq" id="WP_012388928.1">
    <property type="nucleotide sequence ID" value="NC_010842.1"/>
</dbReference>
<dbReference type="SMR" id="B0SA31"/>
<dbReference type="KEGG" id="lbf:LBF_1897"/>
<dbReference type="HOGENOM" id="CLU_098841_0_1_12"/>
<dbReference type="GO" id="GO:0022625">
    <property type="term" value="C:cytosolic large ribosomal subunit"/>
    <property type="evidence" value="ECO:0007669"/>
    <property type="project" value="TreeGrafter"/>
</dbReference>
<dbReference type="GO" id="GO:0008097">
    <property type="term" value="F:5S rRNA binding"/>
    <property type="evidence" value="ECO:0007669"/>
    <property type="project" value="TreeGrafter"/>
</dbReference>
<dbReference type="GO" id="GO:0003735">
    <property type="term" value="F:structural constituent of ribosome"/>
    <property type="evidence" value="ECO:0007669"/>
    <property type="project" value="InterPro"/>
</dbReference>
<dbReference type="GO" id="GO:0006412">
    <property type="term" value="P:translation"/>
    <property type="evidence" value="ECO:0007669"/>
    <property type="project" value="UniProtKB-UniRule"/>
</dbReference>
<dbReference type="CDD" id="cd00432">
    <property type="entry name" value="Ribosomal_L18_L5e"/>
    <property type="match status" value="1"/>
</dbReference>
<dbReference type="FunFam" id="3.30.420.100:FF:000001">
    <property type="entry name" value="50S ribosomal protein L18"/>
    <property type="match status" value="1"/>
</dbReference>
<dbReference type="Gene3D" id="3.30.420.100">
    <property type="match status" value="1"/>
</dbReference>
<dbReference type="HAMAP" id="MF_01337_B">
    <property type="entry name" value="Ribosomal_uL18_B"/>
    <property type="match status" value="1"/>
</dbReference>
<dbReference type="InterPro" id="IPR004389">
    <property type="entry name" value="Ribosomal_uL18_bac-type"/>
</dbReference>
<dbReference type="InterPro" id="IPR005484">
    <property type="entry name" value="Ribosomal_uL18_bac/euk"/>
</dbReference>
<dbReference type="NCBIfam" id="TIGR00060">
    <property type="entry name" value="L18_bact"/>
    <property type="match status" value="1"/>
</dbReference>
<dbReference type="PANTHER" id="PTHR12899">
    <property type="entry name" value="39S RIBOSOMAL PROTEIN L18, MITOCHONDRIAL"/>
    <property type="match status" value="1"/>
</dbReference>
<dbReference type="PANTHER" id="PTHR12899:SF3">
    <property type="entry name" value="LARGE RIBOSOMAL SUBUNIT PROTEIN UL18M"/>
    <property type="match status" value="1"/>
</dbReference>
<dbReference type="Pfam" id="PF00861">
    <property type="entry name" value="Ribosomal_L18p"/>
    <property type="match status" value="1"/>
</dbReference>
<dbReference type="SUPFAM" id="SSF53137">
    <property type="entry name" value="Translational machinery components"/>
    <property type="match status" value="1"/>
</dbReference>
<evidence type="ECO:0000255" key="1">
    <source>
        <dbReference type="HAMAP-Rule" id="MF_01337"/>
    </source>
</evidence>
<evidence type="ECO:0000305" key="2"/>
<feature type="chain" id="PRO_1000142682" description="Large ribosomal subunit protein uL18">
    <location>
        <begin position="1"/>
        <end position="122"/>
    </location>
</feature>
<comment type="function">
    <text evidence="1">This is one of the proteins that bind and probably mediate the attachment of the 5S RNA into the large ribosomal subunit, where it forms part of the central protuberance.</text>
</comment>
<comment type="subunit">
    <text evidence="1">Part of the 50S ribosomal subunit; part of the 5S rRNA/L5/L18/L25 subcomplex. Contacts the 5S and 23S rRNAs.</text>
</comment>
<comment type="similarity">
    <text evidence="1">Belongs to the universal ribosomal protein uL18 family.</text>
</comment>
<name>RL18_LEPBA</name>
<gene>
    <name evidence="1" type="primary">rplR</name>
    <name type="ordered locus">LBF_1897</name>
</gene>
<organism>
    <name type="scientific">Leptospira biflexa serovar Patoc (strain Patoc 1 / Ames)</name>
    <dbReference type="NCBI Taxonomy" id="355278"/>
    <lineage>
        <taxon>Bacteria</taxon>
        <taxon>Pseudomonadati</taxon>
        <taxon>Spirochaetota</taxon>
        <taxon>Spirochaetia</taxon>
        <taxon>Leptospirales</taxon>
        <taxon>Leptospiraceae</taxon>
        <taxon>Leptospira</taxon>
    </lineage>
</organism>
<keyword id="KW-0687">Ribonucleoprotein</keyword>
<keyword id="KW-0689">Ribosomal protein</keyword>
<keyword id="KW-0694">RNA-binding</keyword>
<keyword id="KW-0699">rRNA-binding</keyword>
<proteinExistence type="inferred from homology"/>